<comment type="function">
    <text evidence="2">AcpB and AcpA regulate cap gene expression and capsule synthesis.</text>
</comment>
<comment type="induction">
    <text evidence="2">Transcriptionally regulated by AtxA. Transcription is also positively controlled by carbonic acid and CO(2).</text>
</comment>
<comment type="similarity">
    <text evidence="3">Belongs to the AtxA/AcpA family.</text>
</comment>
<feature type="chain" id="PRO_0000219547" description="Capsule synthesis positive regulator AcpB">
    <location>
        <begin position="1"/>
        <end position="482"/>
    </location>
</feature>
<feature type="domain" description="PRD 1" evidence="1">
    <location>
        <begin position="165"/>
        <end position="270"/>
    </location>
</feature>
<feature type="domain" description="PRD 2" evidence="1">
    <location>
        <begin position="283"/>
        <end position="395"/>
    </location>
</feature>
<feature type="helix" evidence="4">
    <location>
        <begin position="4"/>
        <end position="15"/>
    </location>
</feature>
<feature type="strand" evidence="4">
    <location>
        <begin position="17"/>
        <end position="20"/>
    </location>
</feature>
<feature type="helix" evidence="4">
    <location>
        <begin position="24"/>
        <end position="31"/>
    </location>
</feature>
<feature type="helix" evidence="4">
    <location>
        <begin position="35"/>
        <end position="37"/>
    </location>
</feature>
<feature type="helix" evidence="4">
    <location>
        <begin position="38"/>
        <end position="45"/>
    </location>
</feature>
<feature type="helix" evidence="4">
    <location>
        <begin position="46"/>
        <end position="48"/>
    </location>
</feature>
<feature type="strand" evidence="4">
    <location>
        <begin position="54"/>
        <end position="58"/>
    </location>
</feature>
<feature type="turn" evidence="4">
    <location>
        <begin position="59"/>
        <end position="61"/>
    </location>
</feature>
<feature type="strand" evidence="4">
    <location>
        <begin position="62"/>
        <end position="66"/>
    </location>
</feature>
<feature type="helix" evidence="4">
    <location>
        <begin position="80"/>
        <end position="83"/>
    </location>
</feature>
<feature type="helix" evidence="4">
    <location>
        <begin position="85"/>
        <end position="92"/>
    </location>
</feature>
<feature type="strand" evidence="4">
    <location>
        <begin position="95"/>
        <end position="97"/>
    </location>
</feature>
<feature type="helix" evidence="4">
    <location>
        <begin position="101"/>
        <end position="108"/>
    </location>
</feature>
<feature type="helix" evidence="4">
    <location>
        <begin position="112"/>
        <end position="127"/>
    </location>
</feature>
<feature type="turn" evidence="4">
    <location>
        <begin position="128"/>
        <end position="130"/>
    </location>
</feature>
<feature type="strand" evidence="4">
    <location>
        <begin position="132"/>
        <end position="134"/>
    </location>
</feature>
<feature type="turn" evidence="4">
    <location>
        <begin position="135"/>
        <end position="138"/>
    </location>
</feature>
<feature type="strand" evidence="4">
    <location>
        <begin position="139"/>
        <end position="142"/>
    </location>
</feature>
<feature type="helix" evidence="4">
    <location>
        <begin position="144"/>
        <end position="158"/>
    </location>
</feature>
<feature type="strand" evidence="4">
    <location>
        <begin position="167"/>
        <end position="169"/>
    </location>
</feature>
<feature type="helix" evidence="4">
    <location>
        <begin position="171"/>
        <end position="185"/>
    </location>
</feature>
<feature type="strand" evidence="4">
    <location>
        <begin position="187"/>
        <end position="189"/>
    </location>
</feature>
<feature type="helix" evidence="4">
    <location>
        <begin position="191"/>
        <end position="209"/>
    </location>
</feature>
<feature type="helix" evidence="4">
    <location>
        <begin position="219"/>
        <end position="222"/>
    </location>
</feature>
<feature type="helix" evidence="4">
    <location>
        <begin position="228"/>
        <end position="244"/>
    </location>
</feature>
<feature type="helix" evidence="4">
    <location>
        <begin position="250"/>
        <end position="261"/>
    </location>
</feature>
<feature type="strand" evidence="4">
    <location>
        <begin position="265"/>
        <end position="267"/>
    </location>
</feature>
<reference key="1">
    <citation type="journal article" date="1999" name="J. Appl. Microbiol.">
        <title>Sequence, assembly and analysis of pXO1 and pXO2.</title>
        <authorList>
            <person name="Okinaka R.T."/>
            <person name="Cloud K."/>
            <person name="Hampton O."/>
            <person name="Hoffmaster A."/>
            <person name="Hill K.K."/>
            <person name="Keim P."/>
            <person name="Koehler T."/>
            <person name="Lamke G."/>
            <person name="Kumano S."/>
            <person name="Manter D."/>
            <person name="Martinez Y."/>
            <person name="Ricke D."/>
            <person name="Svensson R."/>
            <person name="Jackson P.J."/>
        </authorList>
    </citation>
    <scope>NUCLEOTIDE SEQUENCE [GENOMIC DNA]</scope>
    <source>
        <strain>Pasteur</strain>
    </source>
</reference>
<reference key="2">
    <citation type="journal article" date="2002" name="Science">
        <title>Comparative genome sequencing for discovery of novel polymorphisms in Bacillus anthracis.</title>
        <authorList>
            <person name="Read T.D."/>
            <person name="Salzberg S.L."/>
            <person name="Pop M."/>
            <person name="Shumway M.F."/>
            <person name="Umayam L."/>
            <person name="Jiang L."/>
            <person name="Holtzapple E."/>
            <person name="Busch J.D."/>
            <person name="Smith K.L."/>
            <person name="Schupp J.M."/>
            <person name="Solomon D."/>
            <person name="Keim P."/>
            <person name="Fraser C.M."/>
        </authorList>
    </citation>
    <scope>NUCLEOTIDE SEQUENCE [GENOMIC DNA]</scope>
    <source>
        <strain>Ames / isolate Florida / A2012</strain>
    </source>
</reference>
<reference key="3">
    <citation type="journal article" date="2009" name="J. Bacteriol.">
        <title>The complete genome sequence of Bacillus anthracis Ames 'Ancestor'.</title>
        <authorList>
            <person name="Ravel J."/>
            <person name="Jiang L."/>
            <person name="Stanley S.T."/>
            <person name="Wilson M.R."/>
            <person name="Decker R.S."/>
            <person name="Read T.D."/>
            <person name="Worsham P."/>
            <person name="Keim P.S."/>
            <person name="Salzberg S.L."/>
            <person name="Fraser-Liggett C.M."/>
            <person name="Rasko D.A."/>
        </authorList>
    </citation>
    <scope>NUCLEOTIDE SEQUENCE [LARGE SCALE GENOMIC DNA]</scope>
    <source>
        <strain>Ames ancestor</strain>
    </source>
</reference>
<reference key="4">
    <citation type="journal article" date="2004" name="J. Bacteriol.">
        <title>atxA controls Bacillus anthracis capsule synthesis via acpA and a newly discovered regulator, acpB.</title>
        <authorList>
            <person name="Drysdale M."/>
            <person name="Bourgogne A."/>
            <person name="Hilsenbeck S.G."/>
            <person name="Koehler T.M."/>
        </authorList>
    </citation>
    <scope>FUNCTION</scope>
    <scope>INDUCTION</scope>
</reference>
<evidence type="ECO:0000255" key="1">
    <source>
        <dbReference type="PROSITE-ProRule" id="PRU00704"/>
    </source>
</evidence>
<evidence type="ECO:0000269" key="2">
    <source>
    </source>
</evidence>
<evidence type="ECO:0000305" key="3"/>
<evidence type="ECO:0007829" key="4">
    <source>
        <dbReference type="PDB" id="9ATX"/>
    </source>
</evidence>
<accession>Q9RMX9</accession>
<protein>
    <recommendedName>
        <fullName>Capsule synthesis positive regulator AcpB</fullName>
    </recommendedName>
</protein>
<proteinExistence type="evidence at protein level"/>
<keyword id="KW-0002">3D-structure</keyword>
<keyword id="KW-0010">Activator</keyword>
<keyword id="KW-0972">Capsule biogenesis/degradation</keyword>
<keyword id="KW-0614">Plasmid</keyword>
<keyword id="KW-1185">Reference proteome</keyword>
<keyword id="KW-0677">Repeat</keyword>
<keyword id="KW-0804">Transcription</keyword>
<keyword id="KW-0805">Transcription regulation</keyword>
<keyword id="KW-0843">Virulence</keyword>
<dbReference type="EMBL" id="AF188935">
    <property type="protein sequence ID" value="AAF13658.1"/>
    <property type="molecule type" value="Genomic_DNA"/>
</dbReference>
<dbReference type="EMBL" id="AE011191">
    <property type="protein sequence ID" value="AAM26216.1"/>
    <property type="molecule type" value="Genomic_DNA"/>
</dbReference>
<dbReference type="EMBL" id="AE017335">
    <property type="protein sequence ID" value="AAT28990.2"/>
    <property type="molecule type" value="Genomic_DNA"/>
</dbReference>
<dbReference type="RefSeq" id="NP_053208.1">
    <property type="nucleotide sequence ID" value="NC_002146.1"/>
</dbReference>
<dbReference type="RefSeq" id="WP_000409765.1">
    <property type="nucleotide sequence ID" value="NZ_VTZL01000009.1"/>
</dbReference>
<dbReference type="PDB" id="9ATX">
    <property type="method" value="X-ray"/>
    <property type="resolution" value="2.11 A"/>
    <property type="chains" value="A=1-272"/>
</dbReference>
<dbReference type="PDBsum" id="9ATX"/>
<dbReference type="SMR" id="Q9RMX9"/>
<dbReference type="GeneID" id="45025362"/>
<dbReference type="KEGG" id="banh:HYU01_29280"/>
<dbReference type="KEGG" id="bar:GBAA_pXO2_0060"/>
<dbReference type="HOGENOM" id="CLU_044310_0_0_9"/>
<dbReference type="OMA" id="NFYIPGI"/>
<dbReference type="Proteomes" id="UP000000594">
    <property type="component" value="Plasmid pXO2"/>
</dbReference>
<dbReference type="GO" id="GO:0006355">
    <property type="term" value="P:regulation of DNA-templated transcription"/>
    <property type="evidence" value="ECO:0007669"/>
    <property type="project" value="InterPro"/>
</dbReference>
<dbReference type="CDD" id="cd05568">
    <property type="entry name" value="PTS_IIB_bgl_like"/>
    <property type="match status" value="1"/>
</dbReference>
<dbReference type="Gene3D" id="3.40.50.2300">
    <property type="match status" value="1"/>
</dbReference>
<dbReference type="InterPro" id="IPR050661">
    <property type="entry name" value="BglG_antiterminators"/>
</dbReference>
<dbReference type="InterPro" id="IPR013199">
    <property type="entry name" value="HTH_Mga_DNA-bd_dom"/>
</dbReference>
<dbReference type="InterPro" id="IPR007737">
    <property type="entry name" value="Mga_HTH"/>
</dbReference>
<dbReference type="InterPro" id="IPR011608">
    <property type="entry name" value="PRD"/>
</dbReference>
<dbReference type="InterPro" id="IPR036634">
    <property type="entry name" value="PRD_sf"/>
</dbReference>
<dbReference type="PANTHER" id="PTHR30185">
    <property type="entry name" value="CRYPTIC BETA-GLUCOSIDE BGL OPERON ANTITERMINATOR"/>
    <property type="match status" value="1"/>
</dbReference>
<dbReference type="PANTHER" id="PTHR30185:SF18">
    <property type="entry name" value="TRANSCRIPTIONAL REGULATOR MTLR"/>
    <property type="match status" value="1"/>
</dbReference>
<dbReference type="Pfam" id="PF08280">
    <property type="entry name" value="HTH_Mga"/>
    <property type="match status" value="1"/>
</dbReference>
<dbReference type="Pfam" id="PF05043">
    <property type="entry name" value="Mga"/>
    <property type="match status" value="1"/>
</dbReference>
<dbReference type="SUPFAM" id="SSF63520">
    <property type="entry name" value="PTS-regulatory domain, PRD"/>
    <property type="match status" value="1"/>
</dbReference>
<dbReference type="PROSITE" id="PS51372">
    <property type="entry name" value="PRD_2"/>
    <property type="match status" value="2"/>
</dbReference>
<name>ACPB_BACAN</name>
<organism>
    <name type="scientific">Bacillus anthracis</name>
    <dbReference type="NCBI Taxonomy" id="1392"/>
    <lineage>
        <taxon>Bacteria</taxon>
        <taxon>Bacillati</taxon>
        <taxon>Bacillota</taxon>
        <taxon>Bacilli</taxon>
        <taxon>Bacillales</taxon>
        <taxon>Bacillaceae</taxon>
        <taxon>Bacillus</taxon>
        <taxon>Bacillus cereus group</taxon>
    </lineage>
</organism>
<sequence>MEKDIKRQIQILEIITSEEKWFTTIEISKILRCCNKTIMKDISFIKDFLPEDWHIKIKKGKGVRIYLPYNKHRNEITFLLFRESLTFRILQHLFERETKTIATLAERLYIQVPSILPALKRVENYLKKFGLKLRKKPLRLEGDEVRIMIMYLDLYLKSYNDTEWPFEKLKKEVIFQYLGTLEESLGISLHVVSKRHLSFFIAILLKRKQQGYKVQLNRKFLYFNTETPDYVKIGRIFEKLEREFGVSLTVQDKILLTISIKSSKYVYKDINKEKEESVQYFKEGNLSIYELVKDFINSLEEKLKVDLISDEEFIFALVDYFKRTIYHLQYLCMFERPQKQTIQYMQTEHSETFSAVKEVYTEFVKKNEIADYVSVEEIAKVTMYIEASRLRYTSNYKKVLLVTGESESWAEYLAATLAKRFGDKIQISTVFFAKKSDHDVNADFIISTIPLDLGSTPIICINSIPTERDYTNIQYYLDLQDG</sequence>
<geneLocation type="plasmid">
    <name>pXO2</name>
</geneLocation>
<gene>
    <name type="primary">acpB</name>
    <name type="ordered locus">pXO2-53</name>
    <name type="ordered locus">BXB0060</name>
    <name type="ordered locus">GBAA_pXO2_0060</name>
</gene>